<sequence>MKYVDEFRDGATARQLAARIAAEADPKRQYRLMEFCGGHTHAIFRYGIPDLLPANVRLIHGPGCPVCVMPIGRLDMAIELARRPGVILCTYGDMLRVPASGRVSLLKARAEGAAVRMLYSPIEALKLAQDNPDRDVVFFAIGFETTTPPTALVIEQAQRLGLKNFSVFCNHVLTPAAMHAILATPEARAGTLQLDGFIGPAHVSTVIGSDAYAPFPRQYGTPLVIAGFEPLDLLQALLMLVRQLNEGRAEVENQFTRAVTAGGNLKAKALTGRIFELRESFEWRGLGALPNSALRIREAFAEFDAERRFALEARSGLENKACECPAILRGAKSPRDCKLFGNPCSPDNPLGSCMVSSEGACAAWYAYGRQRQAVVAVAR</sequence>
<dbReference type="EMBL" id="X63650">
    <property type="protein sequence ID" value="CAA45187.1"/>
    <property type="molecule type" value="Genomic_DNA"/>
</dbReference>
<dbReference type="EMBL" id="L23970">
    <property type="protein sequence ID" value="AAA19512.1"/>
    <property type="molecule type" value="Unassigned_DNA"/>
</dbReference>
<dbReference type="PIR" id="S23443">
    <property type="entry name" value="S23443"/>
</dbReference>
<dbReference type="RefSeq" id="WP_012703486.1">
    <property type="nucleotide sequence ID" value="NZ_FPKM01000029.1"/>
</dbReference>
<dbReference type="SMR" id="P31882"/>
<dbReference type="GeneID" id="88187881"/>
<dbReference type="OMA" id="PWALMEV"/>
<dbReference type="UniPathway" id="UPA00335"/>
<dbReference type="GO" id="GO:0051539">
    <property type="term" value="F:4 iron, 4 sulfur cluster binding"/>
    <property type="evidence" value="ECO:0007669"/>
    <property type="project" value="UniProtKB-KW"/>
</dbReference>
<dbReference type="GO" id="GO:0070025">
    <property type="term" value="F:carbon monoxide binding"/>
    <property type="evidence" value="ECO:0007669"/>
    <property type="project" value="TreeGrafter"/>
</dbReference>
<dbReference type="GO" id="GO:0005506">
    <property type="term" value="F:iron ion binding"/>
    <property type="evidence" value="ECO:0007669"/>
    <property type="project" value="TreeGrafter"/>
</dbReference>
<dbReference type="GO" id="GO:0051604">
    <property type="term" value="P:protein maturation"/>
    <property type="evidence" value="ECO:0007669"/>
    <property type="project" value="TreeGrafter"/>
</dbReference>
<dbReference type="Gene3D" id="6.10.20.100">
    <property type="match status" value="1"/>
</dbReference>
<dbReference type="Gene3D" id="3.40.50.11740">
    <property type="entry name" value="HypD, alpha/beta domain 2"/>
    <property type="match status" value="2"/>
</dbReference>
<dbReference type="InterPro" id="IPR002780">
    <property type="entry name" value="Hyd_form_HypD"/>
</dbReference>
<dbReference type="InterPro" id="IPR042243">
    <property type="entry name" value="HypD_1"/>
</dbReference>
<dbReference type="InterPro" id="IPR042244">
    <property type="entry name" value="HypD_2_sf"/>
</dbReference>
<dbReference type="NCBIfam" id="TIGR00075">
    <property type="entry name" value="hypD"/>
    <property type="match status" value="1"/>
</dbReference>
<dbReference type="PANTHER" id="PTHR30149:SF0">
    <property type="entry name" value="HYDROGENASE MATURATION FACTOR HYPD"/>
    <property type="match status" value="1"/>
</dbReference>
<dbReference type="PANTHER" id="PTHR30149">
    <property type="entry name" value="HYDROGENASE PROTEIN ASSEMBLY PROTEIN HYPD"/>
    <property type="match status" value="1"/>
</dbReference>
<dbReference type="Pfam" id="PF01924">
    <property type="entry name" value="HypD"/>
    <property type="match status" value="1"/>
</dbReference>
<dbReference type="PIRSF" id="PIRSF005622">
    <property type="entry name" value="Hydrgn_mat_hypD"/>
    <property type="match status" value="1"/>
</dbReference>
<evidence type="ECO:0000250" key="1">
    <source>
        <dbReference type="UniProtKB" id="P24192"/>
    </source>
</evidence>
<evidence type="ECO:0000305" key="2"/>
<reference key="1">
    <citation type="journal article" date="1992" name="Biochim. Biophys. Acta">
        <title>Identification of six open reading frames from a region of the Azotobacter vinelandii genome likely involved in dihydrogen metabolism.</title>
        <authorList>
            <person name="Chen J.C."/>
            <person name="Mortenson L.E."/>
        </authorList>
    </citation>
    <scope>NUCLEOTIDE SEQUENCE [GENOMIC DNA]</scope>
    <source>
        <strain>ATCC 13705 / OP1 / DSM 366 / NCIMB 11614 / LMG 3878 / UW</strain>
    </source>
</reference>
<feature type="chain" id="PRO_0000201448" description="Hydrogenase maturation factor HypD">
    <location>
        <begin position="1"/>
        <end position="379"/>
    </location>
</feature>
<feature type="binding site" evidence="1">
    <location>
        <position position="36"/>
    </location>
    <ligand>
        <name>Fe cation</name>
        <dbReference type="ChEBI" id="CHEBI:24875"/>
    </ligand>
</feature>
<feature type="binding site" evidence="1">
    <location>
        <position position="64"/>
    </location>
    <ligand>
        <name>Fe cation</name>
        <dbReference type="ChEBI" id="CHEBI:24875"/>
    </ligand>
</feature>
<feature type="binding site" evidence="1">
    <location>
        <position position="67"/>
    </location>
    <ligand>
        <name>Fe cation</name>
        <dbReference type="ChEBI" id="CHEBI:24875"/>
    </ligand>
</feature>
<protein>
    <recommendedName>
        <fullName evidence="1">Hydrogenase maturation factor HypD</fullName>
    </recommendedName>
</protein>
<organism>
    <name type="scientific">Azotobacter vinelandii</name>
    <dbReference type="NCBI Taxonomy" id="354"/>
    <lineage>
        <taxon>Bacteria</taxon>
        <taxon>Pseudomonadati</taxon>
        <taxon>Pseudomonadota</taxon>
        <taxon>Gammaproteobacteria</taxon>
        <taxon>Pseudomonadales</taxon>
        <taxon>Pseudomonadaceae</taxon>
        <taxon>Azotobacter</taxon>
    </lineage>
</organism>
<gene>
    <name type="primary">hypD</name>
</gene>
<comment type="function">
    <text evidence="1">Involved in the maturation of [NiFe] hydrogenases. Involved in the biosynthesis of the Fe(CN)(2)CO cofactor.</text>
</comment>
<comment type="cofactor">
    <cofactor evidence="1">
        <name>[4Fe-4S] cluster</name>
        <dbReference type="ChEBI" id="CHEBI:49883"/>
    </cofactor>
</comment>
<comment type="pathway">
    <text evidence="1">Protein modification; [NiFe] hydrogenase maturation.</text>
</comment>
<comment type="similarity">
    <text evidence="2">Belongs to the HypD family.</text>
</comment>
<accession>P31882</accession>
<keyword id="KW-0004">4Fe-4S</keyword>
<keyword id="KW-0408">Iron</keyword>
<keyword id="KW-0411">Iron-sulfur</keyword>
<keyword id="KW-0479">Metal-binding</keyword>
<name>HYPD_AZOVI</name>
<proteinExistence type="inferred from homology"/>